<name>PSBL_EPHSI</name>
<proteinExistence type="inferred from homology"/>
<organism>
    <name type="scientific">Ephedra sinica</name>
    <name type="common">Chinese ephedra</name>
    <name type="synonym">Ma huang</name>
    <dbReference type="NCBI Taxonomy" id="33152"/>
    <lineage>
        <taxon>Eukaryota</taxon>
        <taxon>Viridiplantae</taxon>
        <taxon>Streptophyta</taxon>
        <taxon>Embryophyta</taxon>
        <taxon>Tracheophyta</taxon>
        <taxon>Spermatophyta</taxon>
        <taxon>Gnetopsida</taxon>
        <taxon>Gnetidae</taxon>
        <taxon>Ephedrales</taxon>
        <taxon>Ephedraceae</taxon>
        <taxon>Ephedra</taxon>
    </lineage>
</organism>
<comment type="function">
    <text evidence="1">One of the components of the core complex of photosystem II (PSII). PSII is a light-driven water:plastoquinone oxidoreductase that uses light energy to abstract electrons from H(2)O, generating O(2) and a proton gradient subsequently used for ATP formation. It consists of a core antenna complex that captures photons, and an electron transfer chain that converts photonic excitation into a charge separation. This subunit is found at the monomer-monomer interface and is required for correct PSII assembly and/or dimerization.</text>
</comment>
<comment type="subunit">
    <text evidence="1">PSII is composed of 1 copy each of membrane proteins PsbA, PsbB, PsbC, PsbD, PsbE, PsbF, PsbH, PsbI, PsbJ, PsbK, PsbL, PsbM, PsbT, PsbX, PsbY, PsbZ, Psb30/Ycf12, at least 3 peripheral proteins of the oxygen-evolving complex and a large number of cofactors. It forms dimeric complexes.</text>
</comment>
<comment type="subcellular location">
    <subcellularLocation>
        <location evidence="1">Plastid</location>
        <location evidence="1">Chloroplast thylakoid membrane</location>
        <topology evidence="1">Single-pass membrane protein</topology>
    </subcellularLocation>
</comment>
<comment type="similarity">
    <text evidence="1">Belongs to the PsbL family.</text>
</comment>
<geneLocation type="chloroplast"/>
<keyword id="KW-0150">Chloroplast</keyword>
<keyword id="KW-0472">Membrane</keyword>
<keyword id="KW-0602">Photosynthesis</keyword>
<keyword id="KW-0604">Photosystem II</keyword>
<keyword id="KW-0934">Plastid</keyword>
<keyword id="KW-0674">Reaction center</keyword>
<keyword id="KW-0793">Thylakoid</keyword>
<keyword id="KW-0812">Transmembrane</keyword>
<keyword id="KW-1133">Transmembrane helix</keyword>
<protein>
    <recommendedName>
        <fullName evidence="1">Photosystem II reaction center protein L</fullName>
        <shortName evidence="1">PSII-L</shortName>
    </recommendedName>
</protein>
<feature type="chain" id="PRO_0000219712" description="Photosystem II reaction center protein L">
    <location>
        <begin position="1"/>
        <end position="38"/>
    </location>
</feature>
<feature type="transmembrane region" description="Helical" evidence="1">
    <location>
        <begin position="17"/>
        <end position="37"/>
    </location>
</feature>
<evidence type="ECO:0000255" key="1">
    <source>
        <dbReference type="HAMAP-Rule" id="MF_01317"/>
    </source>
</evidence>
<sequence length="38" mass="4443">MTQSNPNEQSVELNRTSLYWGLLLIFVLAVLFSSYFFN</sequence>
<accession>Q8HRZ5</accession>
<dbReference type="EMBL" id="AY007477">
    <property type="protein sequence ID" value="AAG26992.1"/>
    <property type="molecule type" value="Genomic_DNA"/>
</dbReference>
<dbReference type="RefSeq" id="YP_009694800.1">
    <property type="nucleotide sequence ID" value="NC_044773.1"/>
</dbReference>
<dbReference type="SMR" id="Q8HRZ5"/>
<dbReference type="GeneID" id="41825919"/>
<dbReference type="GO" id="GO:0009535">
    <property type="term" value="C:chloroplast thylakoid membrane"/>
    <property type="evidence" value="ECO:0007669"/>
    <property type="project" value="UniProtKB-SubCell"/>
</dbReference>
<dbReference type="GO" id="GO:0009539">
    <property type="term" value="C:photosystem II reaction center"/>
    <property type="evidence" value="ECO:0007669"/>
    <property type="project" value="InterPro"/>
</dbReference>
<dbReference type="GO" id="GO:0015979">
    <property type="term" value="P:photosynthesis"/>
    <property type="evidence" value="ECO:0007669"/>
    <property type="project" value="UniProtKB-UniRule"/>
</dbReference>
<dbReference type="HAMAP" id="MF_01317">
    <property type="entry name" value="PSII_PsbL"/>
    <property type="match status" value="1"/>
</dbReference>
<dbReference type="InterPro" id="IPR003372">
    <property type="entry name" value="PSII_PsbL"/>
</dbReference>
<dbReference type="InterPro" id="IPR037266">
    <property type="entry name" value="PSII_PsbL_sf"/>
</dbReference>
<dbReference type="NCBIfam" id="NF001972">
    <property type="entry name" value="PRK00753.1"/>
    <property type="match status" value="1"/>
</dbReference>
<dbReference type="Pfam" id="PF02419">
    <property type="entry name" value="PsbL"/>
    <property type="match status" value="1"/>
</dbReference>
<dbReference type="SUPFAM" id="SSF161017">
    <property type="entry name" value="Photosystem II reaction center protein L, PsbL"/>
    <property type="match status" value="1"/>
</dbReference>
<gene>
    <name evidence="1" type="primary">psbL</name>
</gene>
<reference key="1">
    <citation type="submission" date="2000-02" db="EMBL/GenBank/DDBJ databases">
        <title>Long branches in the seed plants and the root of the angiosperms.</title>
        <authorList>
            <person name="Graham S.W."/>
            <person name="Reeves P.A."/>
            <person name="Burns A."/>
            <person name="Olmstead R.G."/>
        </authorList>
    </citation>
    <scope>NUCLEOTIDE SEQUENCE [GENOMIC DNA]</scope>
</reference>